<dbReference type="EC" id="1.2.1.59" evidence="1"/>
<dbReference type="EMBL" id="CP000682">
    <property type="protein sequence ID" value="ABP95807.1"/>
    <property type="molecule type" value="Genomic_DNA"/>
</dbReference>
<dbReference type="RefSeq" id="WP_012021594.1">
    <property type="nucleotide sequence ID" value="NC_009440.1"/>
</dbReference>
<dbReference type="SMR" id="A4YHA5"/>
<dbReference type="STRING" id="399549.Msed_1652"/>
<dbReference type="GeneID" id="91756160"/>
<dbReference type="KEGG" id="mse:Msed_1652"/>
<dbReference type="eggNOG" id="arCOG00493">
    <property type="taxonomic scope" value="Archaea"/>
</dbReference>
<dbReference type="HOGENOM" id="CLU_069533_0_0_2"/>
<dbReference type="UniPathway" id="UPA00109">
    <property type="reaction ID" value="UER00184"/>
</dbReference>
<dbReference type="Proteomes" id="UP000000242">
    <property type="component" value="Chromosome"/>
</dbReference>
<dbReference type="GO" id="GO:0005737">
    <property type="term" value="C:cytoplasm"/>
    <property type="evidence" value="ECO:0007669"/>
    <property type="project" value="UniProtKB-SubCell"/>
</dbReference>
<dbReference type="GO" id="GO:0008839">
    <property type="term" value="F:4-hydroxy-tetrahydrodipicolinate reductase"/>
    <property type="evidence" value="ECO:0007669"/>
    <property type="project" value="InterPro"/>
</dbReference>
<dbReference type="GO" id="GO:0004365">
    <property type="term" value="F:glyceraldehyde-3-phosphate dehydrogenase (NAD+) (phosphorylating) activity"/>
    <property type="evidence" value="ECO:0007669"/>
    <property type="project" value="UniProtKB-UniRule"/>
</dbReference>
<dbReference type="GO" id="GO:0047100">
    <property type="term" value="F:glyceraldehyde-3-phosphate dehydrogenase (NADP+) (phosphorylating) activity"/>
    <property type="evidence" value="ECO:0007669"/>
    <property type="project" value="RHEA"/>
</dbReference>
<dbReference type="GO" id="GO:0051287">
    <property type="term" value="F:NAD binding"/>
    <property type="evidence" value="ECO:0007669"/>
    <property type="project" value="InterPro"/>
</dbReference>
<dbReference type="GO" id="GO:0050661">
    <property type="term" value="F:NADP binding"/>
    <property type="evidence" value="ECO:0007669"/>
    <property type="project" value="InterPro"/>
</dbReference>
<dbReference type="GO" id="GO:0006096">
    <property type="term" value="P:glycolytic process"/>
    <property type="evidence" value="ECO:0007669"/>
    <property type="project" value="UniProtKB-UniRule"/>
</dbReference>
<dbReference type="GO" id="GO:0009089">
    <property type="term" value="P:lysine biosynthetic process via diaminopimelate"/>
    <property type="evidence" value="ECO:0007669"/>
    <property type="project" value="InterPro"/>
</dbReference>
<dbReference type="CDD" id="cd18127">
    <property type="entry name" value="GAPDH_II_C"/>
    <property type="match status" value="1"/>
</dbReference>
<dbReference type="CDD" id="cd02278">
    <property type="entry name" value="GAPDH_II_N"/>
    <property type="match status" value="1"/>
</dbReference>
<dbReference type="Gene3D" id="3.30.360.10">
    <property type="entry name" value="Dihydrodipicolinate Reductase, domain 2"/>
    <property type="match status" value="1"/>
</dbReference>
<dbReference type="Gene3D" id="3.40.50.720">
    <property type="entry name" value="NAD(P)-binding Rossmann-like Domain"/>
    <property type="match status" value="1"/>
</dbReference>
<dbReference type="HAMAP" id="MF_00559">
    <property type="entry name" value="G3P_dehdrog_arch"/>
    <property type="match status" value="1"/>
</dbReference>
<dbReference type="InterPro" id="IPR000846">
    <property type="entry name" value="DapB_N"/>
</dbReference>
<dbReference type="InterPro" id="IPR020831">
    <property type="entry name" value="GlycerAld/Erythrose_P_DH"/>
</dbReference>
<dbReference type="InterPro" id="IPR020830">
    <property type="entry name" value="GlycerAld_3-P_DH_AS"/>
</dbReference>
<dbReference type="InterPro" id="IPR020829">
    <property type="entry name" value="GlycerAld_3-P_DH_cat"/>
</dbReference>
<dbReference type="InterPro" id="IPR020828">
    <property type="entry name" value="GlycerAld_3-P_DH_NAD(P)-bd"/>
</dbReference>
<dbReference type="InterPro" id="IPR006436">
    <property type="entry name" value="Glyceraldehyde-3-P_DH_2_arc"/>
</dbReference>
<dbReference type="InterPro" id="IPR036291">
    <property type="entry name" value="NAD(P)-bd_dom_sf"/>
</dbReference>
<dbReference type="NCBIfam" id="TIGR01546">
    <property type="entry name" value="GAPDH-II_archae"/>
    <property type="match status" value="1"/>
</dbReference>
<dbReference type="NCBIfam" id="NF003251">
    <property type="entry name" value="PRK04207.1"/>
    <property type="match status" value="1"/>
</dbReference>
<dbReference type="Pfam" id="PF01113">
    <property type="entry name" value="DapB_N"/>
    <property type="match status" value="1"/>
</dbReference>
<dbReference type="Pfam" id="PF02800">
    <property type="entry name" value="Gp_dh_C"/>
    <property type="match status" value="1"/>
</dbReference>
<dbReference type="PIRSF" id="PIRSF000149">
    <property type="entry name" value="GAP_DH"/>
    <property type="match status" value="1"/>
</dbReference>
<dbReference type="SMART" id="SM00846">
    <property type="entry name" value="Gp_dh_N"/>
    <property type="match status" value="1"/>
</dbReference>
<dbReference type="SUPFAM" id="SSF55347">
    <property type="entry name" value="Glyceraldehyde-3-phosphate dehydrogenase-like, C-terminal domain"/>
    <property type="match status" value="1"/>
</dbReference>
<dbReference type="SUPFAM" id="SSF51735">
    <property type="entry name" value="NAD(P)-binding Rossmann-fold domains"/>
    <property type="match status" value="1"/>
</dbReference>
<dbReference type="PROSITE" id="PS00071">
    <property type="entry name" value="GAPDH"/>
    <property type="match status" value="1"/>
</dbReference>
<name>G3P_METS5</name>
<feature type="chain" id="PRO_1000072562" description="Glyceraldehyde-3-phosphate dehydrogenase">
    <location>
        <begin position="1"/>
        <end position="340"/>
    </location>
</feature>
<feature type="active site" description="Nucleophile" evidence="1">
    <location>
        <position position="139"/>
    </location>
</feature>
<feature type="binding site" evidence="1">
    <location>
        <begin position="11"/>
        <end position="12"/>
    </location>
    <ligand>
        <name>NAD(+)</name>
        <dbReference type="ChEBI" id="CHEBI:57540"/>
    </ligand>
</feature>
<feature type="binding site" evidence="1">
    <location>
        <position position="109"/>
    </location>
    <ligand>
        <name>NAD(+)</name>
        <dbReference type="ChEBI" id="CHEBI:57540"/>
    </ligand>
</feature>
<feature type="binding site" evidence="1">
    <location>
        <begin position="138"/>
        <end position="140"/>
    </location>
    <ligand>
        <name>D-glyceraldehyde 3-phosphate</name>
        <dbReference type="ChEBI" id="CHEBI:59776"/>
    </ligand>
</feature>
<feature type="binding site" evidence="1">
    <location>
        <position position="167"/>
    </location>
    <ligand>
        <name>NAD(+)</name>
        <dbReference type="ChEBI" id="CHEBI:57540"/>
    </ligand>
</feature>
<feature type="binding site" evidence="1">
    <location>
        <begin position="193"/>
        <end position="194"/>
    </location>
    <ligand>
        <name>D-glyceraldehyde 3-phosphate</name>
        <dbReference type="ChEBI" id="CHEBI:59776"/>
    </ligand>
</feature>
<feature type="binding site" evidence="1">
    <location>
        <position position="300"/>
    </location>
    <ligand>
        <name>NAD(+)</name>
        <dbReference type="ChEBI" id="CHEBI:57540"/>
    </ligand>
</feature>
<gene>
    <name evidence="1" type="primary">gap</name>
    <name type="ordered locus">Msed_1652</name>
</gene>
<evidence type="ECO:0000255" key="1">
    <source>
        <dbReference type="HAMAP-Rule" id="MF_00559"/>
    </source>
</evidence>
<protein>
    <recommendedName>
        <fullName evidence="1">Glyceraldehyde-3-phosphate dehydrogenase</fullName>
        <shortName evidence="1">GAPDH</shortName>
        <ecNumber evidence="1">1.2.1.59</ecNumber>
    </recommendedName>
    <alternativeName>
        <fullName evidence="1">NAD(P)-dependent glyceraldehyde-3-phosphate dehydrogenase</fullName>
    </alternativeName>
</protein>
<comment type="catalytic activity">
    <reaction evidence="1">
        <text>D-glyceraldehyde 3-phosphate + phosphate + NADP(+) = (2R)-3-phospho-glyceroyl phosphate + NADPH + H(+)</text>
        <dbReference type="Rhea" id="RHEA:10296"/>
        <dbReference type="ChEBI" id="CHEBI:15378"/>
        <dbReference type="ChEBI" id="CHEBI:43474"/>
        <dbReference type="ChEBI" id="CHEBI:57604"/>
        <dbReference type="ChEBI" id="CHEBI:57783"/>
        <dbReference type="ChEBI" id="CHEBI:58349"/>
        <dbReference type="ChEBI" id="CHEBI:59776"/>
        <dbReference type="EC" id="1.2.1.59"/>
    </reaction>
</comment>
<comment type="catalytic activity">
    <reaction evidence="1">
        <text>D-glyceraldehyde 3-phosphate + phosphate + NAD(+) = (2R)-3-phospho-glyceroyl phosphate + NADH + H(+)</text>
        <dbReference type="Rhea" id="RHEA:10300"/>
        <dbReference type="ChEBI" id="CHEBI:15378"/>
        <dbReference type="ChEBI" id="CHEBI:43474"/>
        <dbReference type="ChEBI" id="CHEBI:57540"/>
        <dbReference type="ChEBI" id="CHEBI:57604"/>
        <dbReference type="ChEBI" id="CHEBI:57945"/>
        <dbReference type="ChEBI" id="CHEBI:59776"/>
        <dbReference type="EC" id="1.2.1.59"/>
    </reaction>
</comment>
<comment type="pathway">
    <text evidence="1">Carbohydrate degradation; glycolysis; pyruvate from D-glyceraldehyde 3-phosphate: step 1/5.</text>
</comment>
<comment type="subunit">
    <text evidence="1">Homotetramer.</text>
</comment>
<comment type="subcellular location">
    <subcellularLocation>
        <location evidence="1">Cytoplasm</location>
    </subcellularLocation>
</comment>
<comment type="similarity">
    <text evidence="1">Belongs to the glyceraldehyde-3-phosphate dehydrogenase family.</text>
</comment>
<keyword id="KW-0963">Cytoplasm</keyword>
<keyword id="KW-0324">Glycolysis</keyword>
<keyword id="KW-0520">NAD</keyword>
<keyword id="KW-0521">NADP</keyword>
<keyword id="KW-0560">Oxidoreductase</keyword>
<keyword id="KW-1185">Reference proteome</keyword>
<organism>
    <name type="scientific">Metallosphaera sedula (strain ATCC 51363 / DSM 5348 / JCM 9185 / NBRC 15509 / TH2)</name>
    <dbReference type="NCBI Taxonomy" id="399549"/>
    <lineage>
        <taxon>Archaea</taxon>
        <taxon>Thermoproteota</taxon>
        <taxon>Thermoprotei</taxon>
        <taxon>Sulfolobales</taxon>
        <taxon>Sulfolobaceae</taxon>
        <taxon>Metallosphaera</taxon>
    </lineage>
</organism>
<accession>A4YHA5</accession>
<sequence length="340" mass="36648">MIKVAVNGYGTIGKRVASAILAQPDMTLVGVSKTSPNYEAYQAQKMGINLYVTKESLKEFEEAGIKVKGVLEDMIKEADVVVDATPNGVGAQYKQVYSSMGKRALFQGGEKANVADVSFSALCNYDEAVDKRYVRVVSCNTTGLLRTLCTLNRVSKIAKVRGTIVRRAADPKEVKKGPINSLVPDPASIPSHHAKDVNTVLKDLDIVTMAVVAPTTLMHVHLLDVTVSSPVTKEDVLSVLSSTPRILLASGKSKVSSTAEIVEVARDMGRPRNDLYELVVFEDSVSVRGNEVFLMYAVHQESIVVPENVDAIRAVSGFADGRKSIEMTNASMGIGKGYLV</sequence>
<proteinExistence type="inferred from homology"/>
<reference key="1">
    <citation type="journal article" date="2008" name="Appl. Environ. Microbiol.">
        <title>The genome sequence of the metal-mobilizing, extremely thermoacidophilic archaeon Metallosphaera sedula provides insights into bioleaching-associated metabolism.</title>
        <authorList>
            <person name="Auernik K.S."/>
            <person name="Maezato Y."/>
            <person name="Blum P.H."/>
            <person name="Kelly R.M."/>
        </authorList>
    </citation>
    <scope>NUCLEOTIDE SEQUENCE [LARGE SCALE GENOMIC DNA]</scope>
    <source>
        <strain>ATCC 51363 / DSM 5348 / JCM 9185 / NBRC 15509 / TH2</strain>
    </source>
</reference>